<accession>P83628</accession>
<evidence type="ECO:0000250" key="1"/>
<evidence type="ECO:0000255" key="2">
    <source>
        <dbReference type="PROSITE-ProRule" id="PRU00653"/>
    </source>
</evidence>
<evidence type="ECO:0000269" key="3">
    <source>
    </source>
</evidence>
<evidence type="ECO:0000303" key="4">
    <source>
    </source>
</evidence>
<evidence type="ECO:0000305" key="5"/>
<gene>
    <name type="primary">igfbp2</name>
</gene>
<protein>
    <recommendedName>
        <fullName>Insulin-like growth factor-binding protein 2</fullName>
        <shortName>IBP-2</shortName>
        <shortName>IGF-binding protein 2</shortName>
        <shortName>IGFBP-2</shortName>
    </recommendedName>
</protein>
<reference evidence="5" key="1">
    <citation type="journal article" date="2003" name="Gen. Comp. Endocrinol.">
        <title>Purification of a 41-kDa insulin-like growth factor binding protein from serum of chinook salmon, Oncorhynchus tshawytscha.</title>
        <authorList>
            <person name="Shimizu M."/>
            <person name="Swanson P."/>
            <person name="Hara A."/>
            <person name="Dickhoff W.W."/>
        </authorList>
    </citation>
    <scope>PROTEIN SEQUENCE</scope>
    <scope>GLYCOSYLATION</scope>
    <scope>INDUCTION</scope>
    <source>
        <tissue evidence="3">Serum</tissue>
    </source>
</reference>
<name>IBP2_ONCTS</name>
<dbReference type="Proteomes" id="UP000694402">
    <property type="component" value="Unplaced"/>
</dbReference>
<dbReference type="GO" id="GO:0005576">
    <property type="term" value="C:extracellular region"/>
    <property type="evidence" value="ECO:0000305"/>
    <property type="project" value="UniProtKB"/>
</dbReference>
<dbReference type="GO" id="GO:0005520">
    <property type="term" value="F:insulin-like growth factor binding"/>
    <property type="evidence" value="ECO:0000314"/>
    <property type="project" value="UniProtKB"/>
</dbReference>
<feature type="chain" id="PRO_0000152772" description="Insulin-like growth factor-binding protein 2">
    <location>
        <begin position="1"/>
        <end position="20" status="greater than"/>
    </location>
</feature>
<feature type="domain" description="IGFBP N-terminal" evidence="2">
    <location>
        <begin position="2"/>
        <end position="20" status="greater than"/>
    </location>
</feature>
<feature type="non-terminal residue" evidence="4">
    <location>
        <position position="20"/>
    </location>
</feature>
<keyword id="KW-0903">Direct protein sequencing</keyword>
<keyword id="KW-0325">Glycoprotein</keyword>
<keyword id="KW-0340">Growth factor binding</keyword>
<keyword id="KW-0341">Growth regulation</keyword>
<keyword id="KW-1185">Reference proteome</keyword>
<keyword id="KW-0964">Secreted</keyword>
<comment type="function">
    <text evidence="1">Inhibits IGF-mediated growth and developmental rates (By similarity). IGF-binding proteins prolong the half-life of the IGFs and have been shown to either inhibit or stimulate the growth promoting effects of the IGFs on cell culture. They alter the interaction of IGFs with their cell surface receptors.</text>
</comment>
<comment type="subunit">
    <text evidence="1">Binds IGF2 more than IGF1.</text>
</comment>
<comment type="subcellular location">
    <subcellularLocation>
        <location evidence="5">Secreted</location>
    </subcellularLocation>
</comment>
<comment type="induction">
    <text evidence="3">Up-regulated by growth hormone treatment and down-regulated by fasting.</text>
</comment>
<comment type="domain">
    <text evidence="1">The C-terminus is required for IGF-binding and growth inhibition.</text>
</comment>
<comment type="PTM">
    <text evidence="3">N-glycosylated.</text>
</comment>
<organism evidence="5">
    <name type="scientific">Oncorhynchus tshawytscha</name>
    <name type="common">Chinook salmon</name>
    <name type="synonym">Salmo tshawytscha</name>
    <dbReference type="NCBI Taxonomy" id="74940"/>
    <lineage>
        <taxon>Eukaryota</taxon>
        <taxon>Metazoa</taxon>
        <taxon>Chordata</taxon>
        <taxon>Craniata</taxon>
        <taxon>Vertebrata</taxon>
        <taxon>Euteleostomi</taxon>
        <taxon>Actinopterygii</taxon>
        <taxon>Neopterygii</taxon>
        <taxon>Teleostei</taxon>
        <taxon>Protacanthopterygii</taxon>
        <taxon>Salmoniformes</taxon>
        <taxon>Salmonidae</taxon>
        <taxon>Salmoninae</taxon>
        <taxon>Oncorhynchus</taxon>
    </lineage>
</organism>
<sequence>DLVFYCPKCTAERQTACPKL</sequence>
<proteinExistence type="evidence at protein level"/>